<dbReference type="EMBL" id="X16676">
    <property type="protein sequence ID" value="CAA34664.1"/>
    <property type="molecule type" value="Genomic_DNA"/>
</dbReference>
<dbReference type="EMBL" id="X78993">
    <property type="protein sequence ID" value="CAA55594.1"/>
    <property type="molecule type" value="Genomic_DNA"/>
</dbReference>
<dbReference type="EMBL" id="Z35957">
    <property type="protein sequence ID" value="CAA85038.1"/>
    <property type="molecule type" value="Genomic_DNA"/>
</dbReference>
<dbReference type="EMBL" id="AY557715">
    <property type="protein sequence ID" value="AAS56041.1"/>
    <property type="molecule type" value="Genomic_DNA"/>
</dbReference>
<dbReference type="EMBL" id="BK006936">
    <property type="protein sequence ID" value="DAA07209.1"/>
    <property type="molecule type" value="Genomic_DNA"/>
</dbReference>
<dbReference type="PIR" id="S22851">
    <property type="entry name" value="WMBYET"/>
</dbReference>
<dbReference type="RefSeq" id="NP_009645.1">
    <property type="nucleotide sequence ID" value="NM_001178436.1"/>
</dbReference>
<dbReference type="PDB" id="1PLQ">
    <property type="method" value="X-ray"/>
    <property type="resolution" value="2.30 A"/>
    <property type="chains" value="A=1-258"/>
</dbReference>
<dbReference type="PDB" id="1PLR">
    <property type="method" value="X-ray"/>
    <property type="resolution" value="3.00 A"/>
    <property type="chains" value="A=1-258"/>
</dbReference>
<dbReference type="PDB" id="1SXJ">
    <property type="method" value="X-ray"/>
    <property type="resolution" value="2.85 A"/>
    <property type="chains" value="F/G/H=1-258"/>
</dbReference>
<dbReference type="PDB" id="2OD8">
    <property type="method" value="X-ray"/>
    <property type="resolution" value="2.80 A"/>
    <property type="chains" value="A=1-258"/>
</dbReference>
<dbReference type="PDB" id="3F1W">
    <property type="method" value="X-ray"/>
    <property type="resolution" value="2.90 A"/>
    <property type="chains" value="A=1-258"/>
</dbReference>
<dbReference type="PDB" id="3GPM">
    <property type="method" value="X-ray"/>
    <property type="resolution" value="3.80 A"/>
    <property type="chains" value="A=1-258"/>
</dbReference>
<dbReference type="PDB" id="3GPN">
    <property type="method" value="X-ray"/>
    <property type="resolution" value="2.50 A"/>
    <property type="chains" value="A=1-258"/>
</dbReference>
<dbReference type="PDB" id="3L0W">
    <property type="method" value="X-ray"/>
    <property type="resolution" value="2.80 A"/>
    <property type="chains" value="A=1-163"/>
</dbReference>
<dbReference type="PDB" id="3L0X">
    <property type="method" value="X-ray"/>
    <property type="resolution" value="3.00 A"/>
    <property type="chains" value="A=1-163, B=165-258"/>
</dbReference>
<dbReference type="PDB" id="3L10">
    <property type="method" value="X-ray"/>
    <property type="resolution" value="2.80 A"/>
    <property type="chains" value="A=1-163"/>
</dbReference>
<dbReference type="PDB" id="3PGE">
    <property type="method" value="X-ray"/>
    <property type="resolution" value="2.80 A"/>
    <property type="chains" value="A=165-258, B=1-163"/>
</dbReference>
<dbReference type="PDB" id="3V60">
    <property type="method" value="X-ray"/>
    <property type="resolution" value="2.60 A"/>
    <property type="chains" value="B=1-258"/>
</dbReference>
<dbReference type="PDB" id="3V61">
    <property type="method" value="X-ray"/>
    <property type="resolution" value="2.80 A"/>
    <property type="chains" value="B=1-258"/>
</dbReference>
<dbReference type="PDB" id="3V62">
    <property type="method" value="X-ray"/>
    <property type="resolution" value="2.90 A"/>
    <property type="chains" value="B/E=1-258"/>
</dbReference>
<dbReference type="PDB" id="4L60">
    <property type="method" value="X-ray"/>
    <property type="resolution" value="3.00 A"/>
    <property type="chains" value="A=1-256"/>
</dbReference>
<dbReference type="PDB" id="4L6P">
    <property type="method" value="X-ray"/>
    <property type="resolution" value="2.68 A"/>
    <property type="chains" value="A/B/C=1-258"/>
</dbReference>
<dbReference type="PDB" id="4YHR">
    <property type="method" value="X-ray"/>
    <property type="resolution" value="2.95 A"/>
    <property type="chains" value="A=1-258"/>
</dbReference>
<dbReference type="PDB" id="5JNE">
    <property type="method" value="X-ray"/>
    <property type="resolution" value="2.85 A"/>
    <property type="chains" value="D/H=1-258"/>
</dbReference>
<dbReference type="PDB" id="5T9D">
    <property type="method" value="X-ray"/>
    <property type="resolution" value="3.27 A"/>
    <property type="chains" value="A/B/C=2-258"/>
</dbReference>
<dbReference type="PDB" id="5V7K">
    <property type="method" value="X-ray"/>
    <property type="resolution" value="3.05 A"/>
    <property type="chains" value="A=1-258"/>
</dbReference>
<dbReference type="PDB" id="5V7L">
    <property type="method" value="X-ray"/>
    <property type="resolution" value="3.20 A"/>
    <property type="chains" value="A=1-258"/>
</dbReference>
<dbReference type="PDB" id="5V7M">
    <property type="method" value="X-ray"/>
    <property type="resolution" value="1.93 A"/>
    <property type="chains" value="A=1-258"/>
</dbReference>
<dbReference type="PDB" id="5ZUT">
    <property type="method" value="X-ray"/>
    <property type="resolution" value="2.82 A"/>
    <property type="chains" value="A=1-258"/>
</dbReference>
<dbReference type="PDB" id="6CX2">
    <property type="method" value="X-ray"/>
    <property type="resolution" value="3.10 A"/>
    <property type="chains" value="A=1-258"/>
</dbReference>
<dbReference type="PDB" id="6CX3">
    <property type="method" value="X-ray"/>
    <property type="resolution" value="3.10 A"/>
    <property type="chains" value="A=1-258"/>
</dbReference>
<dbReference type="PDB" id="6CX4">
    <property type="method" value="X-ray"/>
    <property type="resolution" value="3.08 A"/>
    <property type="chains" value="A=1-258"/>
</dbReference>
<dbReference type="PDB" id="6D0Q">
    <property type="method" value="X-ray"/>
    <property type="resolution" value="2.80 A"/>
    <property type="chains" value="A=1-258"/>
</dbReference>
<dbReference type="PDB" id="6D0R">
    <property type="method" value="X-ray"/>
    <property type="resolution" value="2.86 A"/>
    <property type="chains" value="A=1-258"/>
</dbReference>
<dbReference type="PDB" id="6E49">
    <property type="method" value="X-ray"/>
    <property type="resolution" value="2.90 A"/>
    <property type="chains" value="A/B/C=1-258"/>
</dbReference>
<dbReference type="PDB" id="6W9W">
    <property type="method" value="X-ray"/>
    <property type="resolution" value="2.65 A"/>
    <property type="chains" value="A=1-254"/>
</dbReference>
<dbReference type="PDB" id="6WAC">
    <property type="method" value="X-ray"/>
    <property type="resolution" value="2.90 A"/>
    <property type="chains" value="A=1-253"/>
</dbReference>
<dbReference type="PDB" id="7KC0">
    <property type="method" value="EM"/>
    <property type="resolution" value="3.20 A"/>
    <property type="chains" value="E/F/G=1-258"/>
</dbReference>
<dbReference type="PDB" id="7TFH">
    <property type="method" value="EM"/>
    <property type="resolution" value="3.09 A"/>
    <property type="chains" value="F/G/H=1-258"/>
</dbReference>
<dbReference type="PDB" id="7TFI">
    <property type="method" value="EM"/>
    <property type="resolution" value="3.41 A"/>
    <property type="chains" value="F/G/H=1-258"/>
</dbReference>
<dbReference type="PDB" id="7TFJ">
    <property type="method" value="EM"/>
    <property type="resolution" value="3.30 A"/>
    <property type="chains" value="F/G/H=1-258"/>
</dbReference>
<dbReference type="PDB" id="7THJ">
    <property type="method" value="EM"/>
    <property type="resolution" value="3.80 A"/>
    <property type="chains" value="F/G/H=1-258"/>
</dbReference>
<dbReference type="PDB" id="7THV">
    <property type="method" value="EM"/>
    <property type="resolution" value="4.00 A"/>
    <property type="chains" value="F/G/H=1-258"/>
</dbReference>
<dbReference type="PDB" id="7TI8">
    <property type="method" value="EM"/>
    <property type="resolution" value="3.50 A"/>
    <property type="chains" value="F/G/H=1-258"/>
</dbReference>
<dbReference type="PDB" id="7TIB">
    <property type="method" value="EM"/>
    <property type="resolution" value="3.40 A"/>
    <property type="chains" value="F/G/H=1-258"/>
</dbReference>
<dbReference type="PDB" id="7TIC">
    <property type="method" value="EM"/>
    <property type="resolution" value="3.90 A"/>
    <property type="chains" value="F/G/H=1-258"/>
</dbReference>
<dbReference type="PDB" id="7TID">
    <property type="method" value="EM"/>
    <property type="resolution" value="3.30 A"/>
    <property type="chains" value="F/G/H=1-258"/>
</dbReference>
<dbReference type="PDB" id="7TKU">
    <property type="method" value="EM"/>
    <property type="resolution" value="4.00 A"/>
    <property type="chains" value="F/G/H=1-258"/>
</dbReference>
<dbReference type="PDB" id="7U19">
    <property type="method" value="EM"/>
    <property type="resolution" value="3.70 A"/>
    <property type="chains" value="F/G/H=1-258"/>
</dbReference>
<dbReference type="PDB" id="7U1A">
    <property type="method" value="EM"/>
    <property type="resolution" value="3.30 A"/>
    <property type="chains" value="F/G/H=1-258"/>
</dbReference>
<dbReference type="PDB" id="7U1P">
    <property type="method" value="EM"/>
    <property type="resolution" value="3.00 A"/>
    <property type="chains" value="F/G/H=1-258"/>
</dbReference>
<dbReference type="PDB" id="8DQX">
    <property type="method" value="EM"/>
    <property type="resolution" value="2.10 A"/>
    <property type="chains" value="F/G/H=1-258"/>
</dbReference>
<dbReference type="PDB" id="8DQZ">
    <property type="method" value="EM"/>
    <property type="resolution" value="2.92 A"/>
    <property type="chains" value="F/G/H=1-258"/>
</dbReference>
<dbReference type="PDB" id="8DR0">
    <property type="method" value="EM"/>
    <property type="resolution" value="2.42 A"/>
    <property type="chains" value="F/G/H=1-258"/>
</dbReference>
<dbReference type="PDB" id="8DR1">
    <property type="method" value="EM"/>
    <property type="resolution" value="2.14 A"/>
    <property type="chains" value="F/G/H=1-258"/>
</dbReference>
<dbReference type="PDB" id="8DR3">
    <property type="method" value="EM"/>
    <property type="resolution" value="2.20 A"/>
    <property type="chains" value="F/G/H=1-258"/>
</dbReference>
<dbReference type="PDB" id="8DR4">
    <property type="method" value="EM"/>
    <property type="resolution" value="2.45 A"/>
    <property type="chains" value="F/G/H=1-258"/>
</dbReference>
<dbReference type="PDB" id="8DR5">
    <property type="method" value="EM"/>
    <property type="resolution" value="2.76 A"/>
    <property type="chains" value="F/G/H=1-258"/>
</dbReference>
<dbReference type="PDB" id="8DR6">
    <property type="method" value="EM"/>
    <property type="resolution" value="2.39 A"/>
    <property type="chains" value="F/G/H=1-258"/>
</dbReference>
<dbReference type="PDB" id="8DR7">
    <property type="method" value="EM"/>
    <property type="resolution" value="2.70 A"/>
    <property type="chains" value="F/G/H=1-258"/>
</dbReference>
<dbReference type="PDB" id="8THC">
    <property type="method" value="EM"/>
    <property type="resolution" value="3.67 A"/>
    <property type="chains" value="F/G/H=1-258"/>
</dbReference>
<dbReference type="PDB" id="8THD">
    <property type="method" value="EM"/>
    <property type="resolution" value="3.25 A"/>
    <property type="chains" value="F/G/H=1-258"/>
</dbReference>
<dbReference type="PDB" id="8THW">
    <property type="method" value="X-ray"/>
    <property type="resolution" value="2.60 A"/>
    <property type="chains" value="A/B/C=1-258"/>
</dbReference>
<dbReference type="PDB" id="8TW7">
    <property type="method" value="EM"/>
    <property type="resolution" value="3.80 A"/>
    <property type="chains" value="A/B/C=1-258"/>
</dbReference>
<dbReference type="PDB" id="8TW8">
    <property type="method" value="EM"/>
    <property type="resolution" value="3.50 A"/>
    <property type="chains" value="A/B/C=1-258"/>
</dbReference>
<dbReference type="PDB" id="8TWA">
    <property type="method" value="EM"/>
    <property type="resolution" value="4.10 A"/>
    <property type="chains" value="X/Y/Z=1-258"/>
</dbReference>
<dbReference type="PDB" id="8TWB">
    <property type="method" value="EM"/>
    <property type="resolution" value="3.20 A"/>
    <property type="chains" value="A/B/C=1-258"/>
</dbReference>
<dbReference type="PDBsum" id="1PLQ"/>
<dbReference type="PDBsum" id="1PLR"/>
<dbReference type="PDBsum" id="1SXJ"/>
<dbReference type="PDBsum" id="2OD8"/>
<dbReference type="PDBsum" id="3F1W"/>
<dbReference type="PDBsum" id="3GPM"/>
<dbReference type="PDBsum" id="3GPN"/>
<dbReference type="PDBsum" id="3L0W"/>
<dbReference type="PDBsum" id="3L0X"/>
<dbReference type="PDBsum" id="3L10"/>
<dbReference type="PDBsum" id="3PGE"/>
<dbReference type="PDBsum" id="3V60"/>
<dbReference type="PDBsum" id="3V61"/>
<dbReference type="PDBsum" id="3V62"/>
<dbReference type="PDBsum" id="4L60"/>
<dbReference type="PDBsum" id="4L6P"/>
<dbReference type="PDBsum" id="4YHR"/>
<dbReference type="PDBsum" id="5JNE"/>
<dbReference type="PDBsum" id="5T9D"/>
<dbReference type="PDBsum" id="5V7K"/>
<dbReference type="PDBsum" id="5V7L"/>
<dbReference type="PDBsum" id="5V7M"/>
<dbReference type="PDBsum" id="5ZUT"/>
<dbReference type="PDBsum" id="6CX2"/>
<dbReference type="PDBsum" id="6CX3"/>
<dbReference type="PDBsum" id="6CX4"/>
<dbReference type="PDBsum" id="6D0Q"/>
<dbReference type="PDBsum" id="6D0R"/>
<dbReference type="PDBsum" id="6E49"/>
<dbReference type="PDBsum" id="6W9W"/>
<dbReference type="PDBsum" id="6WAC"/>
<dbReference type="PDBsum" id="7KC0"/>
<dbReference type="PDBsum" id="7TFH"/>
<dbReference type="PDBsum" id="7TFI"/>
<dbReference type="PDBsum" id="7TFJ"/>
<dbReference type="PDBsum" id="7THJ"/>
<dbReference type="PDBsum" id="7THV"/>
<dbReference type="PDBsum" id="7TI8"/>
<dbReference type="PDBsum" id="7TIB"/>
<dbReference type="PDBsum" id="7TIC"/>
<dbReference type="PDBsum" id="7TID"/>
<dbReference type="PDBsum" id="7TKU"/>
<dbReference type="PDBsum" id="7U19"/>
<dbReference type="PDBsum" id="7U1A"/>
<dbReference type="PDBsum" id="7U1P"/>
<dbReference type="PDBsum" id="8DQX"/>
<dbReference type="PDBsum" id="8DQZ"/>
<dbReference type="PDBsum" id="8DR0"/>
<dbReference type="PDBsum" id="8DR1"/>
<dbReference type="PDBsum" id="8DR3"/>
<dbReference type="PDBsum" id="8DR4"/>
<dbReference type="PDBsum" id="8DR5"/>
<dbReference type="PDBsum" id="8DR6"/>
<dbReference type="PDBsum" id="8DR7"/>
<dbReference type="PDBsum" id="8THC"/>
<dbReference type="PDBsum" id="8THD"/>
<dbReference type="PDBsum" id="8THW"/>
<dbReference type="PDBsum" id="8TW7"/>
<dbReference type="PDBsum" id="8TW8"/>
<dbReference type="PDBsum" id="8TWA"/>
<dbReference type="PDBsum" id="8TWB"/>
<dbReference type="EMDB" id="EMD-25568"/>
<dbReference type="EMDB" id="EMD-25569"/>
<dbReference type="EMDB" id="EMD-25614"/>
<dbReference type="EMDB" id="EMD-25615"/>
<dbReference type="EMDB" id="EMD-25616"/>
<dbReference type="EMDB" id="EMD-25617"/>
<dbReference type="EMDB" id="EMD-25753"/>
<dbReference type="EMDB" id="EMD-25872"/>
<dbReference type="EMDB" id="EMD-25873"/>
<dbReference type="EMDB" id="EMD-25874"/>
<dbReference type="EMDB" id="EMD-26297"/>
<dbReference type="EMDB" id="EMD-26298"/>
<dbReference type="EMDB" id="EMD-26302"/>
<dbReference type="EMDB" id="EMD-27663"/>
<dbReference type="EMDB" id="EMD-27666"/>
<dbReference type="EMDB" id="EMD-27668"/>
<dbReference type="EMDB" id="EMD-27669"/>
<dbReference type="EMDB" id="EMD-27670"/>
<dbReference type="EMDB" id="EMD-27672"/>
<dbReference type="EMDB" id="EMD-41661"/>
<dbReference type="EMDB" id="EMD-41662"/>
<dbReference type="EMDB" id="EMD-41664"/>
<dbReference type="EMDB" id="EMD-41665"/>
<dbReference type="SASBDB" id="P15873"/>
<dbReference type="SMR" id="P15873"/>
<dbReference type="BioGRID" id="32794">
    <property type="interactions" value="485"/>
</dbReference>
<dbReference type="ComplexPortal" id="CPX-544">
    <property type="entry name" value="PCNA homotrimer"/>
</dbReference>
<dbReference type="DIP" id="DIP-2417N"/>
<dbReference type="FunCoup" id="P15873">
    <property type="interactions" value="1402"/>
</dbReference>
<dbReference type="IntAct" id="P15873">
    <property type="interactions" value="39"/>
</dbReference>
<dbReference type="MINT" id="P15873"/>
<dbReference type="STRING" id="4932.YBR088C"/>
<dbReference type="iPTMnet" id="P15873"/>
<dbReference type="PaxDb" id="4932-YBR088C"/>
<dbReference type="PeptideAtlas" id="P15873"/>
<dbReference type="TopDownProteomics" id="P15873"/>
<dbReference type="EnsemblFungi" id="YBR088C_mRNA">
    <property type="protein sequence ID" value="YBR088C"/>
    <property type="gene ID" value="YBR088C"/>
</dbReference>
<dbReference type="GeneID" id="852385"/>
<dbReference type="KEGG" id="sce:YBR088C"/>
<dbReference type="AGR" id="SGD:S000000292"/>
<dbReference type="SGD" id="S000000292">
    <property type="gene designation" value="POL30"/>
</dbReference>
<dbReference type="VEuPathDB" id="FungiDB:YBR088C"/>
<dbReference type="eggNOG" id="KOG1636">
    <property type="taxonomic scope" value="Eukaryota"/>
</dbReference>
<dbReference type="GeneTree" id="ENSGT00390000004965"/>
<dbReference type="HOGENOM" id="CLU_043978_3_0_1"/>
<dbReference type="InParanoid" id="P15873"/>
<dbReference type="OMA" id="EMKLINM"/>
<dbReference type="OrthoDB" id="534348at2759"/>
<dbReference type="BioCyc" id="YEAST:G3O-29055-MONOMER"/>
<dbReference type="Reactome" id="R-SCE-110312">
    <property type="pathway name" value="Translesion synthesis by REV1"/>
</dbReference>
<dbReference type="Reactome" id="R-SCE-110320">
    <property type="pathway name" value="Translesion Synthesis by POLH"/>
</dbReference>
<dbReference type="Reactome" id="R-SCE-4615885">
    <property type="pathway name" value="SUMOylation of DNA replication proteins"/>
</dbReference>
<dbReference type="Reactome" id="R-SCE-5358565">
    <property type="pathway name" value="Mismatch repair (MMR) directed by MSH2:MSH6 (MutSalpha)"/>
</dbReference>
<dbReference type="Reactome" id="R-SCE-5655862">
    <property type="pathway name" value="Translesion synthesis by POLK"/>
</dbReference>
<dbReference type="Reactome" id="R-SCE-5656121">
    <property type="pathway name" value="Translesion synthesis by POLI"/>
</dbReference>
<dbReference type="Reactome" id="R-SCE-5656169">
    <property type="pathway name" value="Termination of translesion DNA synthesis"/>
</dbReference>
<dbReference type="Reactome" id="R-SCE-6782135">
    <property type="pathway name" value="Dual incision in TC-NER"/>
</dbReference>
<dbReference type="Reactome" id="R-SCE-69091">
    <property type="pathway name" value="Polymerase switching"/>
</dbReference>
<dbReference type="Reactome" id="R-SCE-69166">
    <property type="pathway name" value="Removal of the Flap Intermediate"/>
</dbReference>
<dbReference type="Reactome" id="R-SCE-69183">
    <property type="pathway name" value="Processive synthesis on the lagging strand"/>
</dbReference>
<dbReference type="Reactome" id="R-SCE-8866654">
    <property type="pathway name" value="E3 ubiquitin ligases ubiquitinate target proteins"/>
</dbReference>
<dbReference type="BioGRID-ORCS" id="852385">
    <property type="hits" value="9 hits in 10 CRISPR screens"/>
</dbReference>
<dbReference type="EvolutionaryTrace" id="P15873"/>
<dbReference type="PRO" id="PR:P15873"/>
<dbReference type="Proteomes" id="UP000002311">
    <property type="component" value="Chromosome II"/>
</dbReference>
<dbReference type="RNAct" id="P15873">
    <property type="molecule type" value="protein"/>
</dbReference>
<dbReference type="GO" id="GO:0000781">
    <property type="term" value="C:chromosome, telomeric region"/>
    <property type="evidence" value="ECO:0007669"/>
    <property type="project" value="GOC"/>
</dbReference>
<dbReference type="GO" id="GO:0005634">
    <property type="term" value="C:nucleus"/>
    <property type="evidence" value="ECO:0000314"/>
    <property type="project" value="ComplexPortal"/>
</dbReference>
<dbReference type="GO" id="GO:0043626">
    <property type="term" value="C:PCNA complex"/>
    <property type="evidence" value="ECO:0000353"/>
    <property type="project" value="ComplexPortal"/>
</dbReference>
<dbReference type="GO" id="GO:0005657">
    <property type="term" value="C:replication fork"/>
    <property type="evidence" value="ECO:0000314"/>
    <property type="project" value="SGD"/>
</dbReference>
<dbReference type="GO" id="GO:0003677">
    <property type="term" value="F:DNA binding"/>
    <property type="evidence" value="ECO:0007669"/>
    <property type="project" value="UniProtKB-KW"/>
</dbReference>
<dbReference type="GO" id="GO:0030337">
    <property type="term" value="F:DNA polymerase processivity factor activity"/>
    <property type="evidence" value="ECO:0000314"/>
    <property type="project" value="SGD"/>
</dbReference>
<dbReference type="GO" id="GO:0042802">
    <property type="term" value="F:identical protein binding"/>
    <property type="evidence" value="ECO:0000353"/>
    <property type="project" value="IntAct"/>
</dbReference>
<dbReference type="GO" id="GO:0070987">
    <property type="term" value="P:error-free translesion synthesis"/>
    <property type="evidence" value="ECO:0000316"/>
    <property type="project" value="SGD"/>
</dbReference>
<dbReference type="GO" id="GO:0034087">
    <property type="term" value="P:establishment of mitotic sister chromatid cohesion"/>
    <property type="evidence" value="ECO:0000316"/>
    <property type="project" value="SGD"/>
</dbReference>
<dbReference type="GO" id="GO:0006273">
    <property type="term" value="P:lagging strand elongation"/>
    <property type="evidence" value="ECO:0000314"/>
    <property type="project" value="SGD"/>
</dbReference>
<dbReference type="GO" id="GO:0006272">
    <property type="term" value="P:leading strand elongation"/>
    <property type="evidence" value="ECO:0000314"/>
    <property type="project" value="SGD"/>
</dbReference>
<dbReference type="GO" id="GO:0035753">
    <property type="term" value="P:maintenance of DNA trinucleotide repeats"/>
    <property type="evidence" value="ECO:0000315"/>
    <property type="project" value="SGD"/>
</dbReference>
<dbReference type="GO" id="GO:0000710">
    <property type="term" value="P:meiotic mismatch repair"/>
    <property type="evidence" value="ECO:0000315"/>
    <property type="project" value="SGD"/>
</dbReference>
<dbReference type="GO" id="GO:0006298">
    <property type="term" value="P:mismatch repair"/>
    <property type="evidence" value="ECO:0000315"/>
    <property type="project" value="SGD"/>
</dbReference>
<dbReference type="GO" id="GO:0000278">
    <property type="term" value="P:mitotic cell cycle"/>
    <property type="evidence" value="ECO:0000316"/>
    <property type="project" value="SGD"/>
</dbReference>
<dbReference type="GO" id="GO:0007064">
    <property type="term" value="P:mitotic sister chromatid cohesion"/>
    <property type="evidence" value="ECO:0000316"/>
    <property type="project" value="SGD"/>
</dbReference>
<dbReference type="GO" id="GO:0006289">
    <property type="term" value="P:nucleotide-excision repair"/>
    <property type="evidence" value="ECO:0000315"/>
    <property type="project" value="SGD"/>
</dbReference>
<dbReference type="GO" id="GO:0051054">
    <property type="term" value="P:positive regulation of DNA metabolic process"/>
    <property type="evidence" value="ECO:0000314"/>
    <property type="project" value="SGD"/>
</dbReference>
<dbReference type="GO" id="GO:0045739">
    <property type="term" value="P:positive regulation of DNA repair"/>
    <property type="evidence" value="ECO:0000315"/>
    <property type="project" value="ComplexPortal"/>
</dbReference>
<dbReference type="GO" id="GO:0045740">
    <property type="term" value="P:positive regulation of DNA replication"/>
    <property type="evidence" value="ECO:0000314"/>
    <property type="project" value="ComplexPortal"/>
</dbReference>
<dbReference type="GO" id="GO:0006301">
    <property type="term" value="P:postreplication repair"/>
    <property type="evidence" value="ECO:0000315"/>
    <property type="project" value="SGD"/>
</dbReference>
<dbReference type="GO" id="GO:0030466">
    <property type="term" value="P:silent mating-type cassette heterochromatin formation"/>
    <property type="evidence" value="ECO:0000315"/>
    <property type="project" value="SGD"/>
</dbReference>
<dbReference type="GO" id="GO:0031509">
    <property type="term" value="P:subtelomeric heterochromatin formation"/>
    <property type="evidence" value="ECO:0000315"/>
    <property type="project" value="SGD"/>
</dbReference>
<dbReference type="GO" id="GO:0019985">
    <property type="term" value="P:translesion synthesis"/>
    <property type="evidence" value="ECO:0000318"/>
    <property type="project" value="GO_Central"/>
</dbReference>
<dbReference type="CDD" id="cd00577">
    <property type="entry name" value="PCNA"/>
    <property type="match status" value="1"/>
</dbReference>
<dbReference type="FunFam" id="3.10.150.10:FF:000006">
    <property type="entry name" value="Proliferating cell nuclear antigen"/>
    <property type="match status" value="1"/>
</dbReference>
<dbReference type="FunFam" id="3.10.150.10:FF:000011">
    <property type="entry name" value="Proliferating cell nuclear antigen"/>
    <property type="match status" value="1"/>
</dbReference>
<dbReference type="Gene3D" id="3.10.150.10">
    <property type="entry name" value="DNA Polymerase III, subunit A, domain 2"/>
    <property type="match status" value="2"/>
</dbReference>
<dbReference type="HAMAP" id="MF_00317">
    <property type="entry name" value="DNApol_clamp_arch"/>
    <property type="match status" value="1"/>
</dbReference>
<dbReference type="InterPro" id="IPR046938">
    <property type="entry name" value="DNA_clamp_sf"/>
</dbReference>
<dbReference type="InterPro" id="IPR000730">
    <property type="entry name" value="Pr_cel_nuc_antig"/>
</dbReference>
<dbReference type="InterPro" id="IPR022649">
    <property type="entry name" value="Pr_cel_nuc_antig_C"/>
</dbReference>
<dbReference type="InterPro" id="IPR022659">
    <property type="entry name" value="Pr_cel_nuc_antig_CS"/>
</dbReference>
<dbReference type="InterPro" id="IPR022648">
    <property type="entry name" value="Pr_cel_nuc_antig_N"/>
</dbReference>
<dbReference type="NCBIfam" id="TIGR00590">
    <property type="entry name" value="pcna"/>
    <property type="match status" value="1"/>
</dbReference>
<dbReference type="PANTHER" id="PTHR11352">
    <property type="entry name" value="PROLIFERATING CELL NUCLEAR ANTIGEN"/>
    <property type="match status" value="1"/>
</dbReference>
<dbReference type="PANTHER" id="PTHR11352:SF0">
    <property type="entry name" value="PROLIFERATING CELL NUCLEAR ANTIGEN"/>
    <property type="match status" value="1"/>
</dbReference>
<dbReference type="Pfam" id="PF02747">
    <property type="entry name" value="PCNA_C"/>
    <property type="match status" value="1"/>
</dbReference>
<dbReference type="Pfam" id="PF00705">
    <property type="entry name" value="PCNA_N"/>
    <property type="match status" value="1"/>
</dbReference>
<dbReference type="PRINTS" id="PR00339">
    <property type="entry name" value="PCNACYCLIN"/>
</dbReference>
<dbReference type="SUPFAM" id="SSF55979">
    <property type="entry name" value="DNA clamp"/>
    <property type="match status" value="2"/>
</dbReference>
<dbReference type="PROSITE" id="PS01251">
    <property type="entry name" value="PCNA_1"/>
    <property type="match status" value="1"/>
</dbReference>
<dbReference type="PROSITE" id="PS00293">
    <property type="entry name" value="PCNA_2"/>
    <property type="match status" value="1"/>
</dbReference>
<sequence>MLEAKFEEASLFKRIIDGFKDCVQLVNFQCKEDGIIAQAVDDSRVLLVSLEIGVEAFQEYRCDHPVTLGMDLTSLSKILRCGNNTDTLTLIADNTPDSIILLFEDTKKDRIAEYSLKLMDIDADFLKIEELQYDSTLSLPSSEFSKIVRDLSQLSDSINIMITKETIKFVADGDIGSGSVIIKPFVDMEHPETSIKLEMDQPVDLTFGAKYLLDIIKGSSLSDRVGIRLSSEAPALFQFDLKSGFLQFFLAPKFNDEE</sequence>
<name>PCNA_YEAST</name>
<accession>P15873</accession>
<accession>D6VQ89</accession>
<protein>
    <recommendedName>
        <fullName>Proliferating cell nuclear antigen</fullName>
        <shortName>PCNA</shortName>
    </recommendedName>
</protein>
<feature type="chain" id="PRO_0000149176" description="Proliferating cell nuclear antigen">
    <location>
        <begin position="1"/>
        <end position="258"/>
    </location>
</feature>
<feature type="DNA-binding region" evidence="1">
    <location>
        <begin position="61"/>
        <end position="80"/>
    </location>
</feature>
<feature type="cross-link" description="Glycyl lysine isopeptide (Lys-Gly) (interchain with G-Cter in SUMO)" evidence="4">
    <location>
        <position position="127"/>
    </location>
</feature>
<feature type="cross-link" description="Glycyl lysine isopeptide (Lys-Gly) (interchain with G-Cter in SUMO); alternate" evidence="4 6">
    <location>
        <position position="164"/>
    </location>
</feature>
<feature type="cross-link" description="Glycyl lysine isopeptide (Lys-Gly) (interchain with G-Cter in ubiquitin); alternate" evidence="3">
    <location>
        <position position="164"/>
    </location>
</feature>
<feature type="strand" evidence="15">
    <location>
        <begin position="2"/>
        <end position="7"/>
    </location>
</feature>
<feature type="helix" evidence="15">
    <location>
        <begin position="9"/>
        <end position="17"/>
    </location>
</feature>
<feature type="turn" evidence="15">
    <location>
        <begin position="18"/>
        <end position="22"/>
    </location>
</feature>
<feature type="strand" evidence="15">
    <location>
        <begin position="24"/>
        <end position="31"/>
    </location>
</feature>
<feature type="strand" evidence="15">
    <location>
        <begin position="34"/>
        <end position="40"/>
    </location>
</feature>
<feature type="strand" evidence="16">
    <location>
        <begin position="42"/>
        <end position="44"/>
    </location>
</feature>
<feature type="strand" evidence="15">
    <location>
        <begin position="46"/>
        <end position="53"/>
    </location>
</feature>
<feature type="helix" evidence="15">
    <location>
        <begin position="54"/>
        <end position="56"/>
    </location>
</feature>
<feature type="strand" evidence="15">
    <location>
        <begin position="57"/>
        <end position="64"/>
    </location>
</feature>
<feature type="strand" evidence="15">
    <location>
        <begin position="66"/>
        <end position="71"/>
    </location>
</feature>
<feature type="helix" evidence="15">
    <location>
        <begin position="72"/>
        <end position="79"/>
    </location>
</feature>
<feature type="strand" evidence="14">
    <location>
        <begin position="80"/>
        <end position="82"/>
    </location>
</feature>
<feature type="strand" evidence="15">
    <location>
        <begin position="84"/>
        <end position="92"/>
    </location>
</feature>
<feature type="strand" evidence="15">
    <location>
        <begin position="97"/>
        <end position="104"/>
    </location>
</feature>
<feature type="strand" evidence="15">
    <location>
        <begin position="106"/>
        <end position="109"/>
    </location>
</feature>
<feature type="strand" evidence="15">
    <location>
        <begin position="111"/>
        <end position="117"/>
    </location>
</feature>
<feature type="helix" evidence="13">
    <location>
        <begin position="122"/>
        <end position="124"/>
    </location>
</feature>
<feature type="strand" evidence="17">
    <location>
        <begin position="126"/>
        <end position="128"/>
    </location>
</feature>
<feature type="strand" evidence="15">
    <location>
        <begin position="134"/>
        <end position="140"/>
    </location>
</feature>
<feature type="helix" evidence="15">
    <location>
        <begin position="141"/>
        <end position="152"/>
    </location>
</feature>
<feature type="strand" evidence="15">
    <location>
        <begin position="156"/>
        <end position="163"/>
    </location>
</feature>
<feature type="strand" evidence="15">
    <location>
        <begin position="166"/>
        <end position="173"/>
    </location>
</feature>
<feature type="strand" evidence="15">
    <location>
        <begin position="176"/>
        <end position="182"/>
    </location>
</feature>
<feature type="strand" evidence="11">
    <location>
        <begin position="185"/>
        <end position="187"/>
    </location>
</feature>
<feature type="strand" evidence="12">
    <location>
        <begin position="188"/>
        <end position="190"/>
    </location>
</feature>
<feature type="helix" evidence="15">
    <location>
        <begin position="191"/>
        <end position="193"/>
    </location>
</feature>
<feature type="strand" evidence="15">
    <location>
        <begin position="195"/>
        <end position="201"/>
    </location>
</feature>
<feature type="strand" evidence="15">
    <location>
        <begin position="203"/>
        <end position="208"/>
    </location>
</feature>
<feature type="helix" evidence="15">
    <location>
        <begin position="209"/>
        <end position="215"/>
    </location>
</feature>
<feature type="helix" evidence="15">
    <location>
        <begin position="216"/>
        <end position="220"/>
    </location>
</feature>
<feature type="strand" evidence="15">
    <location>
        <begin position="223"/>
        <end position="229"/>
    </location>
</feature>
<feature type="strand" evidence="15">
    <location>
        <begin position="231"/>
        <end position="233"/>
    </location>
</feature>
<feature type="strand" evidence="15">
    <location>
        <begin position="235"/>
        <end position="241"/>
    </location>
</feature>
<feature type="strand" evidence="15">
    <location>
        <begin position="244"/>
        <end position="250"/>
    </location>
</feature>
<feature type="strand" evidence="10">
    <location>
        <begin position="254"/>
        <end position="256"/>
    </location>
</feature>
<gene>
    <name type="primary">POL30</name>
    <name type="ordered locus">YBR088C</name>
    <name type="ORF">YBR0811</name>
</gene>
<comment type="function">
    <text evidence="2 3">This protein is an auxiliary protein of DNA polymerase delta and is involved in the control of eukaryotic DNA replication by increasing the polymerase's processibility during elongation of the leading strand. Involved in DNA repair.</text>
</comment>
<comment type="subunit">
    <text evidence="2 5 7 8">Homotrimer (PubMed:15201901). Interacts with RAD30 (PubMed:11545742). Interacts with MCM10 (PubMed:16782870). Interacts with UBP10 (PubMed:22829782).</text>
</comment>
<comment type="interaction">
    <interactant intactId="EBI-12993">
        <id>P15873</id>
    </interactant>
    <interactant intactId="EBI-22988">
        <id>P43605</id>
        <label>ECO1</label>
    </interactant>
    <organismsDiffer>false</organismsDiffer>
    <experiments>2</experiments>
</comment>
<comment type="interaction">
    <interactant intactId="EBI-12993">
        <id>P15873</id>
    </interactant>
    <interactant intactId="EBI-32195">
        <id>Q12050</id>
        <label>ELG1</label>
    </interactant>
    <organismsDiffer>false</organismsDiffer>
    <experiments>9</experiments>
</comment>
<comment type="interaction">
    <interactant intactId="EBI-12993">
        <id>P15873</id>
    </interactant>
    <interactant intactId="EBI-5965">
        <id>P32354</id>
        <label>MCM10</label>
    </interactant>
    <organismsDiffer>false</organismsDiffer>
    <experiments>4</experiments>
</comment>
<comment type="interaction">
    <interactant intactId="EBI-12993">
        <id>P15873</id>
    </interactant>
    <interactant intactId="EBI-11383">
        <id>Q03834</id>
        <label>MSH6</label>
    </interactant>
    <organismsDiffer>false</organismsDiffer>
    <experiments>5</experiments>
</comment>
<comment type="interaction">
    <interactant intactId="EBI-12993">
        <id>P15873</id>
    </interactant>
    <interactant intactId="EBI-12993">
        <id>P15873</id>
        <label>POL30</label>
    </interactant>
    <organismsDiffer>false</organismsDiffer>
    <experiments>10</experiments>
</comment>
<comment type="interaction">
    <interactant intactId="EBI-12993">
        <id>P15873</id>
    </interactant>
    <interactant intactId="EBI-6084">
        <id>P47110</id>
        <label>POL32</label>
    </interactant>
    <organismsDiffer>false</organismsDiffer>
    <experiments>4</experiments>
</comment>
<comment type="interaction">
    <interactant intactId="EBI-12993">
        <id>P15873</id>
    </interactant>
    <interactant intactId="EBI-14693">
        <id>P26793</id>
        <label>RAD27</label>
    </interactant>
    <organismsDiffer>false</organismsDiffer>
    <experiments>7</experiments>
</comment>
<comment type="interaction">
    <interactant intactId="EBI-12993">
        <id>P15873</id>
    </interactant>
    <interactant intactId="EBI-36214">
        <id>Q04049</id>
        <label>RAD30</label>
    </interactant>
    <organismsDiffer>false</organismsDiffer>
    <experiments>7</experiments>
</comment>
<comment type="interaction">
    <interactant intactId="EBI-12993">
        <id>P15873</id>
    </interactant>
    <interactant intactId="EBI-3913">
        <id>Q12495</id>
        <label>RLF2</label>
    </interactant>
    <organismsDiffer>false</organismsDiffer>
    <experiments>3</experiments>
</comment>
<comment type="interaction">
    <interactant intactId="EBI-12993">
        <id>P15873</id>
    </interactant>
    <interactant intactId="EBI-17490">
        <id>Q12306</id>
        <label>SMT3</label>
    </interactant>
    <organismsDiffer>false</organismsDiffer>
    <experiments>6</experiments>
</comment>
<comment type="interaction">
    <interactant intactId="EBI-12993">
        <id>P15873</id>
    </interactant>
    <interactant intactId="EBI-18110">
        <id>P12954</id>
        <label>SRS2</label>
    </interactant>
    <organismsDiffer>false</organismsDiffer>
    <experiments>10</experiments>
</comment>
<comment type="interaction">
    <interactant intactId="EBI-12993">
        <id>P15873</id>
    </interactant>
    <interactant intactId="EBI-2097931">
        <id>P12887</id>
        <label>UNG1</label>
    </interactant>
    <organismsDiffer>false</organismsDiffer>
    <experiments>4</experiments>
</comment>
<comment type="subcellular location">
    <subcellularLocation>
        <location>Nucleus</location>
    </subcellularLocation>
</comment>
<comment type="PTM">
    <text evidence="3 4 6">Sumoylated on Lys-164, and to a lesser extent on Lys-127 by the UBC9/SIZ1 complex during S-phase; which impairs ubiquitination and function in DNA repair.</text>
</comment>
<comment type="PTM">
    <text evidence="3">Monoubiquitinated on Lys-164 by the UBC2/RAD18 complex upon DNA damage, and then polyubiquitinated through 'Lys-63'-linkage by UBC13/MMS2. Ubiquitination is required for UBC2-mediated DNA repair.</text>
</comment>
<comment type="PTM">
    <text evidence="8">Lys-164 is deubiquitinated by UBP10 (PubMed:22829782).</text>
</comment>
<comment type="similarity">
    <text evidence="9">Belongs to the PCNA family.</text>
</comment>
<proteinExistence type="evidence at protein level"/>
<organism>
    <name type="scientific">Saccharomyces cerevisiae (strain ATCC 204508 / S288c)</name>
    <name type="common">Baker's yeast</name>
    <dbReference type="NCBI Taxonomy" id="559292"/>
    <lineage>
        <taxon>Eukaryota</taxon>
        <taxon>Fungi</taxon>
        <taxon>Dikarya</taxon>
        <taxon>Ascomycota</taxon>
        <taxon>Saccharomycotina</taxon>
        <taxon>Saccharomycetes</taxon>
        <taxon>Saccharomycetales</taxon>
        <taxon>Saccharomycetaceae</taxon>
        <taxon>Saccharomyces</taxon>
    </lineage>
</organism>
<evidence type="ECO:0000255" key="1"/>
<evidence type="ECO:0000269" key="2">
    <source>
    </source>
</evidence>
<evidence type="ECO:0000269" key="3">
    <source>
    </source>
</evidence>
<evidence type="ECO:0000269" key="4">
    <source>
    </source>
</evidence>
<evidence type="ECO:0000269" key="5">
    <source>
    </source>
</evidence>
<evidence type="ECO:0000269" key="6">
    <source>
    </source>
</evidence>
<evidence type="ECO:0000269" key="7">
    <source>
    </source>
</evidence>
<evidence type="ECO:0000269" key="8">
    <source>
    </source>
</evidence>
<evidence type="ECO:0000305" key="9"/>
<evidence type="ECO:0007829" key="10">
    <source>
        <dbReference type="PDB" id="1PLQ"/>
    </source>
</evidence>
<evidence type="ECO:0007829" key="11">
    <source>
        <dbReference type="PDB" id="1SXJ"/>
    </source>
</evidence>
<evidence type="ECO:0007829" key="12">
    <source>
        <dbReference type="PDB" id="3V60"/>
    </source>
</evidence>
<evidence type="ECO:0007829" key="13">
    <source>
        <dbReference type="PDB" id="3V62"/>
    </source>
</evidence>
<evidence type="ECO:0007829" key="14">
    <source>
        <dbReference type="PDB" id="5V7K"/>
    </source>
</evidence>
<evidence type="ECO:0007829" key="15">
    <source>
        <dbReference type="PDB" id="5V7M"/>
    </source>
</evidence>
<evidence type="ECO:0007829" key="16">
    <source>
        <dbReference type="PDB" id="5ZUT"/>
    </source>
</evidence>
<evidence type="ECO:0007829" key="17">
    <source>
        <dbReference type="PDB" id="7KC0"/>
    </source>
</evidence>
<keyword id="KW-0002">3D-structure</keyword>
<keyword id="KW-0903">Direct protein sequencing</keyword>
<keyword id="KW-0227">DNA damage</keyword>
<keyword id="KW-0234">DNA repair</keyword>
<keyword id="KW-0235">DNA replication</keyword>
<keyword id="KW-0238">DNA-binding</keyword>
<keyword id="KW-1017">Isopeptide bond</keyword>
<keyword id="KW-0539">Nucleus</keyword>
<keyword id="KW-1185">Reference proteome</keyword>
<keyword id="KW-0832">Ubl conjugation</keyword>
<reference key="1">
    <citation type="journal article" date="1990" name="Nucleic Acids Res.">
        <title>Molecular cloning, structure and expression of the yeast proliferating cell nuclear antigen gene.</title>
        <authorList>
            <person name="Bauer G.A."/>
            <person name="Burgess P.M.J."/>
        </authorList>
    </citation>
    <scope>NUCLEOTIDE SEQUENCE [GENOMIC DNA]</scope>
    <scope>PROTEIN SEQUENCE OF 1-41 AND 231-240</scope>
</reference>
<reference key="2">
    <citation type="journal article" date="1994" name="Yeast">
        <title>Analysis of a 70 kb region on the right arm of yeast chromosome II.</title>
        <authorList>
            <person name="Mannhaupt G."/>
            <person name="Stucka R."/>
            <person name="Ehnle S."/>
            <person name="Vetter I."/>
            <person name="Feldmann H."/>
        </authorList>
    </citation>
    <scope>NUCLEOTIDE SEQUENCE [GENOMIC DNA]</scope>
    <source>
        <strain>ATCC 204508 / S288c</strain>
    </source>
</reference>
<reference key="3">
    <citation type="journal article" date="1994" name="EMBO J.">
        <title>Complete DNA sequence of yeast chromosome II.</title>
        <authorList>
            <person name="Feldmann H."/>
            <person name="Aigle M."/>
            <person name="Aljinovic G."/>
            <person name="Andre B."/>
            <person name="Baclet M.C."/>
            <person name="Barthe C."/>
            <person name="Baur A."/>
            <person name="Becam A.-M."/>
            <person name="Biteau N."/>
            <person name="Boles E."/>
            <person name="Brandt T."/>
            <person name="Brendel M."/>
            <person name="Brueckner M."/>
            <person name="Bussereau F."/>
            <person name="Christiansen C."/>
            <person name="Contreras R."/>
            <person name="Crouzet M."/>
            <person name="Cziepluch C."/>
            <person name="Demolis N."/>
            <person name="Delaveau T."/>
            <person name="Doignon F."/>
            <person name="Domdey H."/>
            <person name="Duesterhus S."/>
            <person name="Dubois E."/>
            <person name="Dujon B."/>
            <person name="El Bakkoury M."/>
            <person name="Entian K.-D."/>
            <person name="Feuermann M."/>
            <person name="Fiers W."/>
            <person name="Fobo G.M."/>
            <person name="Fritz C."/>
            <person name="Gassenhuber J."/>
            <person name="Glansdorff N."/>
            <person name="Goffeau A."/>
            <person name="Grivell L.A."/>
            <person name="de Haan M."/>
            <person name="Hein C."/>
            <person name="Herbert C.J."/>
            <person name="Hollenberg C.P."/>
            <person name="Holmstroem K."/>
            <person name="Jacq C."/>
            <person name="Jacquet M."/>
            <person name="Jauniaux J.-C."/>
            <person name="Jonniaux J.-L."/>
            <person name="Kallesoee T."/>
            <person name="Kiesau P."/>
            <person name="Kirchrath L."/>
            <person name="Koetter P."/>
            <person name="Korol S."/>
            <person name="Liebl S."/>
            <person name="Logghe M."/>
            <person name="Lohan A.J.E."/>
            <person name="Louis E.J."/>
            <person name="Li Z.Y."/>
            <person name="Maat M.J."/>
            <person name="Mallet L."/>
            <person name="Mannhaupt G."/>
            <person name="Messenguy F."/>
            <person name="Miosga T."/>
            <person name="Molemans F."/>
            <person name="Mueller S."/>
            <person name="Nasr F."/>
            <person name="Obermaier B."/>
            <person name="Perea J."/>
            <person name="Pierard A."/>
            <person name="Piravandi E."/>
            <person name="Pohl F.M."/>
            <person name="Pohl T.M."/>
            <person name="Potier S."/>
            <person name="Proft M."/>
            <person name="Purnelle B."/>
            <person name="Ramezani Rad M."/>
            <person name="Rieger M."/>
            <person name="Rose M."/>
            <person name="Schaaff-Gerstenschlaeger I."/>
            <person name="Scherens B."/>
            <person name="Schwarzlose C."/>
            <person name="Skala J."/>
            <person name="Slonimski P.P."/>
            <person name="Smits P.H.M."/>
            <person name="Souciet J.-L."/>
            <person name="Steensma H.Y."/>
            <person name="Stucka R."/>
            <person name="Urrestarazu L.A."/>
            <person name="van der Aart Q.J.M."/>
            <person name="Van Dyck L."/>
            <person name="Vassarotti A."/>
            <person name="Vetter I."/>
            <person name="Vierendeels F."/>
            <person name="Vissers S."/>
            <person name="Wagner G."/>
            <person name="de Wergifosse P."/>
            <person name="Wolfe K.H."/>
            <person name="Zagulski M."/>
            <person name="Zimmermann F.K."/>
            <person name="Mewes H.-W."/>
            <person name="Kleine K."/>
        </authorList>
    </citation>
    <scope>NUCLEOTIDE SEQUENCE [LARGE SCALE GENOMIC DNA]</scope>
    <source>
        <strain>ATCC 204508 / S288c</strain>
    </source>
</reference>
<reference key="4">
    <citation type="journal article" date="2014" name="G3 (Bethesda)">
        <title>The reference genome sequence of Saccharomyces cerevisiae: Then and now.</title>
        <authorList>
            <person name="Engel S.R."/>
            <person name="Dietrich F.S."/>
            <person name="Fisk D.G."/>
            <person name="Binkley G."/>
            <person name="Balakrishnan R."/>
            <person name="Costanzo M.C."/>
            <person name="Dwight S.S."/>
            <person name="Hitz B.C."/>
            <person name="Karra K."/>
            <person name="Nash R.S."/>
            <person name="Weng S."/>
            <person name="Wong E.D."/>
            <person name="Lloyd P."/>
            <person name="Skrzypek M.S."/>
            <person name="Miyasato S.R."/>
            <person name="Simison M."/>
            <person name="Cherry J.M."/>
        </authorList>
    </citation>
    <scope>GENOME REANNOTATION</scope>
    <source>
        <strain>ATCC 204508 / S288c</strain>
    </source>
</reference>
<reference key="5">
    <citation type="journal article" date="2007" name="Genome Res.">
        <title>Approaching a complete repository of sequence-verified protein-encoding clones for Saccharomyces cerevisiae.</title>
        <authorList>
            <person name="Hu Y."/>
            <person name="Rolfs A."/>
            <person name="Bhullar B."/>
            <person name="Murthy T.V.S."/>
            <person name="Zhu C."/>
            <person name="Berger M.F."/>
            <person name="Camargo A.A."/>
            <person name="Kelley F."/>
            <person name="McCarron S."/>
            <person name="Jepson D."/>
            <person name="Richardson A."/>
            <person name="Raphael J."/>
            <person name="Moreira D."/>
            <person name="Taycher E."/>
            <person name="Zuo D."/>
            <person name="Mohr S."/>
            <person name="Kane M.F."/>
            <person name="Williamson J."/>
            <person name="Simpson A.J.G."/>
            <person name="Bulyk M.L."/>
            <person name="Harlow E."/>
            <person name="Marsischky G."/>
            <person name="Kolodner R.D."/>
            <person name="LaBaer J."/>
        </authorList>
    </citation>
    <scope>NUCLEOTIDE SEQUENCE [GENOMIC DNA]</scope>
    <source>
        <strain>ATCC 204508 / S288c</strain>
    </source>
</reference>
<reference key="6">
    <citation type="journal article" date="2001" name="Mol. Cell">
        <title>Interaction with PCNA is essential for yeast DNA polymerase eta function.</title>
        <authorList>
            <person name="Haracska L."/>
            <person name="Kondratick C.M."/>
            <person name="Unk I."/>
            <person name="Prakash S."/>
            <person name="Prakash L."/>
        </authorList>
    </citation>
    <scope>FUNCTION</scope>
    <scope>INTERACTION WITH RAD30</scope>
</reference>
<reference key="7">
    <citation type="journal article" date="2002" name="Nature">
        <title>RAD6-dependent DNA repair is linked to modification of PCNA by ubiquitin and SUMO.</title>
        <authorList>
            <person name="Hoege C."/>
            <person name="Pfander B."/>
            <person name="Moldovan G.-L."/>
            <person name="Pyrowolakis G."/>
            <person name="Jentsch S."/>
        </authorList>
    </citation>
    <scope>FUNCTION</scope>
    <scope>SUMOYLATION AT LYS-127 AND LYS-164</scope>
    <scope>UBIQUITINATION AT LYS-164</scope>
    <scope>IDENTIFICATION BY MASS SPECTROMETRY</scope>
</reference>
<reference key="8">
    <citation type="journal article" date="2004" name="J. Biol. Chem.">
        <title>Global analyses of sumoylated proteins in Saccharomyces cerevisiae. Induction of protein sumoylation by cellular stresses.</title>
        <authorList>
            <person name="Zhou W."/>
            <person name="Ryan J.J."/>
            <person name="Zhou H."/>
        </authorList>
    </citation>
    <scope>SUMOYLATION [LARGE SCALE ANALYSIS] AT LYS-127 AND LYS-164</scope>
    <scope>IDENTIFICATION BY MASS SPECTROMETRY</scope>
</reference>
<reference key="9">
    <citation type="journal article" date="2005" name="Mol. Cell. Proteomics">
        <title>A proteomic strategy for gaining insights into protein sumoylation in yeast.</title>
        <authorList>
            <person name="Denison C."/>
            <person name="Rudner A.D."/>
            <person name="Gerber S.A."/>
            <person name="Bakalarski C.E."/>
            <person name="Moazed D."/>
            <person name="Gygi S.P."/>
        </authorList>
    </citation>
    <scope>SUMOYLATION [LARGE SCALE ANALYSIS] AT LYS-164</scope>
    <scope>IDENTIFICATION BY MASS SPECTROMETRY</scope>
    <source>
        <strain>EJY251-11b</strain>
    </source>
</reference>
<reference key="10">
    <citation type="journal article" date="2006" name="Mol. Cell. Biol.">
        <title>Interaction between PCNA and diubiquitinated Mcm10 is essential for cell growth in budding yeast.</title>
        <authorList>
            <person name="Das-Bradoo S."/>
            <person name="Ricke R.M."/>
            <person name="Bielinsky A.-K."/>
        </authorList>
    </citation>
    <scope>INTERACTION WITH MCM10</scope>
</reference>
<reference key="11">
    <citation type="journal article" date="2012" name="PLoS Genet.">
        <title>Reversal of PCNA ubiquitylation by Ubp10 in Saccharomyces cerevisiae.</title>
        <authorList>
            <person name="Gallego-Sanchez A."/>
            <person name="Andres S."/>
            <person name="Conde F."/>
            <person name="San-Segundo P.A."/>
            <person name="Bueno A."/>
        </authorList>
    </citation>
    <scope>DEUBIQUITINATION BY UBP10</scope>
    <scope>INTERACTION WITH UBP10</scope>
</reference>
<reference key="12">
    <citation type="journal article" date="2012" name="Proc. Natl. Acad. Sci. U.S.A.">
        <title>N-terminal acetylome analyses and functional insights of the N-terminal acetyltransferase NatB.</title>
        <authorList>
            <person name="Van Damme P."/>
            <person name="Lasa M."/>
            <person name="Polevoda B."/>
            <person name="Gazquez C."/>
            <person name="Elosegui-Artola A."/>
            <person name="Kim D.S."/>
            <person name="De Juan-Pardo E."/>
            <person name="Demeyer K."/>
            <person name="Hole K."/>
            <person name="Larrea E."/>
            <person name="Timmerman E."/>
            <person name="Prieto J."/>
            <person name="Arnesen T."/>
            <person name="Sherman F."/>
            <person name="Gevaert K."/>
            <person name="Aldabe R."/>
        </authorList>
    </citation>
    <scope>IDENTIFICATION BY MASS SPECTROMETRY [LARGE SCALE ANALYSIS]</scope>
</reference>
<reference key="13">
    <citation type="journal article" date="1994" name="Cell">
        <title>Crystal structure of the eukaryotic DNA polymerase processivity factor PCNA.</title>
        <authorList>
            <person name="Krishna T.S."/>
            <person name="Kong X.P."/>
            <person name="Gary S."/>
            <person name="Burgers P.M."/>
            <person name="Kuriyan J."/>
        </authorList>
    </citation>
    <scope>X-RAY CRYSTALLOGRAPHY (2.3 ANGSTROMS)</scope>
</reference>
<reference key="14">
    <citation type="journal article" date="2004" name="Nature">
        <title>Structural analysis of a eukaryotic sliding DNA clamp-clamp loader complex.</title>
        <authorList>
            <person name="Bowman G.D."/>
            <person name="O'Donnell M."/>
            <person name="Kuriyan J."/>
        </authorList>
    </citation>
    <scope>X-RAY CRYSTALLOGRAPHY (2.85 ANGSTROMS) IN COMPLEX WITH RFC1; RCF2; RCF3; RCF4 AND RCF5</scope>
</reference>